<name>KDGD_ACIB5</name>
<keyword id="KW-0456">Lyase</keyword>
<sequence length="303" mass="32859">MDALELKNIISDGLLSFPVTDFDQNGDFNKSSYAKRLEWLAPYGASALFAAGGTGEFFSLTGNEYSEVIKTAVDTCRGSVPIIAGAGGPTRQAIEQAKEAERLGAHGILLMPHYLTEASQEGLIEHVKQVCNSVDFGVIFYNRSVSRLNLDSIQKLTEMCPNLIGFKDSSGQIDMMTAVTQTMGDRLSYLGGLPTAEVFAAPYKALGCPVYSSAVFNFIPKTAMEFYNALRSDDFETTNRLIKDFFLPLIKIRDRKSGYAVSMIKAGAKIVGHDAGPVRPPLSDLTQADYEDLAALIATLGPQ</sequence>
<accession>B7I9K0</accession>
<reference key="1">
    <citation type="journal article" date="2008" name="J. Bacteriol.">
        <title>Comparative genome sequence analysis of multidrug-resistant Acinetobacter baumannii.</title>
        <authorList>
            <person name="Adams M.D."/>
            <person name="Goglin K."/>
            <person name="Molyneaux N."/>
            <person name="Hujer K.M."/>
            <person name="Lavender H."/>
            <person name="Jamison J.J."/>
            <person name="MacDonald I.J."/>
            <person name="Martin K.M."/>
            <person name="Russo T."/>
            <person name="Campagnari A.A."/>
            <person name="Hujer A.M."/>
            <person name="Bonomo R.A."/>
            <person name="Gill S.R."/>
        </authorList>
    </citation>
    <scope>NUCLEOTIDE SEQUENCE [LARGE SCALE GENOMIC DNA]</scope>
    <source>
        <strain>AB0057</strain>
    </source>
</reference>
<evidence type="ECO:0000255" key="1">
    <source>
        <dbReference type="HAMAP-Rule" id="MF_00694"/>
    </source>
</evidence>
<proteinExistence type="inferred from homology"/>
<protein>
    <recommendedName>
        <fullName evidence="1">Probable 5-dehydro-4-deoxyglucarate dehydratase</fullName>
        <ecNumber evidence="1">4.2.1.41</ecNumber>
    </recommendedName>
    <alternativeName>
        <fullName evidence="1">5-keto-4-deoxy-glucarate dehydratase</fullName>
        <shortName evidence="1">KDGDH</shortName>
    </alternativeName>
</protein>
<feature type="chain" id="PRO_1000132265" description="Probable 5-dehydro-4-deoxyglucarate dehydratase">
    <location>
        <begin position="1"/>
        <end position="303"/>
    </location>
</feature>
<dbReference type="EC" id="4.2.1.41" evidence="1"/>
<dbReference type="EMBL" id="CP001182">
    <property type="protein sequence ID" value="ACJ40208.1"/>
    <property type="molecule type" value="Genomic_DNA"/>
</dbReference>
<dbReference type="SMR" id="B7I9K0"/>
<dbReference type="KEGG" id="abn:AB57_1185"/>
<dbReference type="HOGENOM" id="CLU_049343_5_2_6"/>
<dbReference type="UniPathway" id="UPA00564">
    <property type="reaction ID" value="UER00628"/>
</dbReference>
<dbReference type="Proteomes" id="UP000007094">
    <property type="component" value="Chromosome"/>
</dbReference>
<dbReference type="GO" id="GO:0008840">
    <property type="term" value="F:4-hydroxy-tetrahydrodipicolinate synthase activity"/>
    <property type="evidence" value="ECO:0007669"/>
    <property type="project" value="TreeGrafter"/>
</dbReference>
<dbReference type="GO" id="GO:0047448">
    <property type="term" value="F:5-dehydro-4-deoxyglucarate dehydratase activity"/>
    <property type="evidence" value="ECO:0007669"/>
    <property type="project" value="UniProtKB-UniRule"/>
</dbReference>
<dbReference type="GO" id="GO:0042838">
    <property type="term" value="P:D-glucarate catabolic process"/>
    <property type="evidence" value="ECO:0007669"/>
    <property type="project" value="UniProtKB-UniRule"/>
</dbReference>
<dbReference type="CDD" id="cd00951">
    <property type="entry name" value="KDGDH"/>
    <property type="match status" value="1"/>
</dbReference>
<dbReference type="Gene3D" id="3.20.20.70">
    <property type="entry name" value="Aldolase class I"/>
    <property type="match status" value="1"/>
</dbReference>
<dbReference type="HAMAP" id="MF_00694">
    <property type="entry name" value="KDGDH"/>
    <property type="match status" value="1"/>
</dbReference>
<dbReference type="InterPro" id="IPR013785">
    <property type="entry name" value="Aldolase_TIM"/>
</dbReference>
<dbReference type="InterPro" id="IPR002220">
    <property type="entry name" value="DapA-like"/>
</dbReference>
<dbReference type="InterPro" id="IPR017655">
    <property type="entry name" value="Dehydro-deoxyglucarate_dehyd"/>
</dbReference>
<dbReference type="NCBIfam" id="TIGR03249">
    <property type="entry name" value="KdgD"/>
    <property type="match status" value="1"/>
</dbReference>
<dbReference type="NCBIfam" id="NF002958">
    <property type="entry name" value="PRK03620.1"/>
    <property type="match status" value="1"/>
</dbReference>
<dbReference type="PANTHER" id="PTHR12128:SF19">
    <property type="entry name" value="5-DEHYDRO-4-DEOXYGLUCARATE DEHYDRATASE 2-RELATED"/>
    <property type="match status" value="1"/>
</dbReference>
<dbReference type="PANTHER" id="PTHR12128">
    <property type="entry name" value="DIHYDRODIPICOLINATE SYNTHASE"/>
    <property type="match status" value="1"/>
</dbReference>
<dbReference type="Pfam" id="PF00701">
    <property type="entry name" value="DHDPS"/>
    <property type="match status" value="1"/>
</dbReference>
<dbReference type="PIRSF" id="PIRSF001365">
    <property type="entry name" value="DHDPS"/>
    <property type="match status" value="1"/>
</dbReference>
<dbReference type="PRINTS" id="PR00146">
    <property type="entry name" value="DHPICSNTHASE"/>
</dbReference>
<dbReference type="SMART" id="SM01130">
    <property type="entry name" value="DHDPS"/>
    <property type="match status" value="1"/>
</dbReference>
<dbReference type="SUPFAM" id="SSF51569">
    <property type="entry name" value="Aldolase"/>
    <property type="match status" value="1"/>
</dbReference>
<comment type="catalytic activity">
    <reaction evidence="1">
        <text>5-dehydro-4-deoxy-D-glucarate + H(+) = 2,5-dioxopentanoate + CO2 + H2O</text>
        <dbReference type="Rhea" id="RHEA:24608"/>
        <dbReference type="ChEBI" id="CHEBI:15377"/>
        <dbReference type="ChEBI" id="CHEBI:15378"/>
        <dbReference type="ChEBI" id="CHEBI:16526"/>
        <dbReference type="ChEBI" id="CHEBI:42819"/>
        <dbReference type="ChEBI" id="CHEBI:58136"/>
        <dbReference type="EC" id="4.2.1.41"/>
    </reaction>
</comment>
<comment type="pathway">
    <text evidence="1">Carbohydrate acid metabolism; D-glucarate degradation; 2,5-dioxopentanoate from D-glucarate: step 2/2.</text>
</comment>
<comment type="similarity">
    <text evidence="1">Belongs to the DapA family.</text>
</comment>
<gene>
    <name type="ordered locus">AB57_1185</name>
</gene>
<organism>
    <name type="scientific">Acinetobacter baumannii (strain AB0057)</name>
    <dbReference type="NCBI Taxonomy" id="480119"/>
    <lineage>
        <taxon>Bacteria</taxon>
        <taxon>Pseudomonadati</taxon>
        <taxon>Pseudomonadota</taxon>
        <taxon>Gammaproteobacteria</taxon>
        <taxon>Moraxellales</taxon>
        <taxon>Moraxellaceae</taxon>
        <taxon>Acinetobacter</taxon>
        <taxon>Acinetobacter calcoaceticus/baumannii complex</taxon>
    </lineage>
</organism>